<proteinExistence type="inferred from homology"/>
<name>RLMD_HAEP3</name>
<sequence length="436" mass="49550">MALLYAPQKKQKTTQKIVAEIQDLDYQGLGVAKIQGKTWFIENALPTEKVEAVVTDEKRQYGLATAQKWLQESSQRVEPQCRYYGRCGGCQGQHIPVEMQRKAKEKALFSRLSKLQAEPIQLMPMICGEQWAYRRRVRLSLLWNAKSKTVEMGFRQKNSNQLVSIQQCLVAEQAINDLIPKLTSLLAQYSAPKQLGHIELVSAENGVAMLLRYKGNLAETDRTLLLEFARVNAVNLFLQDDQNIQLVHGEMPYYALDDIRLSFDIRDFIQVNTRLNQQMVETALDWLDLNQDDHVLDLFCGMGNFTLPLAKRVKSAVGIEGVLDMVKKAQANAQFNHIENVEFYQADLDQSFSEQPWSKQHFNKILLDPPRSGAAFALNALCELGAESILYVSCNPATLVRDAEILRSFGYRIIKTAMIDMFPNTSHLESVTLFIK</sequence>
<gene>
    <name evidence="1" type="primary">rlmD</name>
    <name type="ordered locus">PARA_02980</name>
</gene>
<dbReference type="EC" id="2.1.1.190" evidence="1"/>
<dbReference type="EMBL" id="FQ312002">
    <property type="protein sequence ID" value="CBW14405.1"/>
    <property type="molecule type" value="Genomic_DNA"/>
</dbReference>
<dbReference type="RefSeq" id="WP_014064222.1">
    <property type="nucleotide sequence ID" value="NC_015964.1"/>
</dbReference>
<dbReference type="SMR" id="E1W218"/>
<dbReference type="KEGG" id="hpr:PARA_02980"/>
<dbReference type="PATRIC" id="fig|862965.3.peg.298"/>
<dbReference type="eggNOG" id="COG2265">
    <property type="taxonomic scope" value="Bacteria"/>
</dbReference>
<dbReference type="HOGENOM" id="CLU_014689_8_2_6"/>
<dbReference type="Proteomes" id="UP000007052">
    <property type="component" value="Chromosome"/>
</dbReference>
<dbReference type="GO" id="GO:0051539">
    <property type="term" value="F:4 iron, 4 sulfur cluster binding"/>
    <property type="evidence" value="ECO:0007669"/>
    <property type="project" value="UniProtKB-KW"/>
</dbReference>
<dbReference type="GO" id="GO:0005506">
    <property type="term" value="F:iron ion binding"/>
    <property type="evidence" value="ECO:0007669"/>
    <property type="project" value="UniProtKB-UniRule"/>
</dbReference>
<dbReference type="GO" id="GO:0003723">
    <property type="term" value="F:RNA binding"/>
    <property type="evidence" value="ECO:0007669"/>
    <property type="project" value="InterPro"/>
</dbReference>
<dbReference type="GO" id="GO:0070041">
    <property type="term" value="F:rRNA (uridine-C5-)-methyltransferase activity"/>
    <property type="evidence" value="ECO:0007669"/>
    <property type="project" value="UniProtKB-UniRule"/>
</dbReference>
<dbReference type="GO" id="GO:0070475">
    <property type="term" value="P:rRNA base methylation"/>
    <property type="evidence" value="ECO:0007669"/>
    <property type="project" value="TreeGrafter"/>
</dbReference>
<dbReference type="CDD" id="cd02440">
    <property type="entry name" value="AdoMet_MTases"/>
    <property type="match status" value="1"/>
</dbReference>
<dbReference type="FunFam" id="3.40.50.150:FF:000009">
    <property type="entry name" value="23S rRNA (Uracil(1939)-C(5))-methyltransferase RlmD"/>
    <property type="match status" value="1"/>
</dbReference>
<dbReference type="FunFam" id="2.40.50.140:FF:000097">
    <property type="entry name" value="23S rRNA (uracil(1939)-C(5))-methyltransferase RlmD"/>
    <property type="match status" value="1"/>
</dbReference>
<dbReference type="Gene3D" id="2.40.50.1070">
    <property type="match status" value="1"/>
</dbReference>
<dbReference type="Gene3D" id="2.40.50.140">
    <property type="entry name" value="Nucleic acid-binding proteins"/>
    <property type="match status" value="1"/>
</dbReference>
<dbReference type="Gene3D" id="3.40.50.150">
    <property type="entry name" value="Vaccinia Virus protein VP39"/>
    <property type="match status" value="1"/>
</dbReference>
<dbReference type="HAMAP" id="MF_01010">
    <property type="entry name" value="23SrRNA_methyltr_RlmD"/>
    <property type="match status" value="1"/>
</dbReference>
<dbReference type="InterPro" id="IPR001566">
    <property type="entry name" value="23S_rRNA_MeTrfase_RlmD"/>
</dbReference>
<dbReference type="InterPro" id="IPR030390">
    <property type="entry name" value="MeTrfase_TrmA_AS"/>
</dbReference>
<dbReference type="InterPro" id="IPR012340">
    <property type="entry name" value="NA-bd_OB-fold"/>
</dbReference>
<dbReference type="InterPro" id="IPR029063">
    <property type="entry name" value="SAM-dependent_MTases_sf"/>
</dbReference>
<dbReference type="InterPro" id="IPR002792">
    <property type="entry name" value="TRAM_dom"/>
</dbReference>
<dbReference type="InterPro" id="IPR010280">
    <property type="entry name" value="U5_MeTrfase_fam"/>
</dbReference>
<dbReference type="NCBIfam" id="NF009639">
    <property type="entry name" value="PRK13168.1"/>
    <property type="match status" value="1"/>
</dbReference>
<dbReference type="NCBIfam" id="TIGR00479">
    <property type="entry name" value="rumA"/>
    <property type="match status" value="1"/>
</dbReference>
<dbReference type="PANTHER" id="PTHR11061:SF49">
    <property type="entry name" value="23S RRNA (URACIL(1939)-C(5))-METHYLTRANSFERASE RLMD"/>
    <property type="match status" value="1"/>
</dbReference>
<dbReference type="PANTHER" id="PTHR11061">
    <property type="entry name" value="RNA M5U METHYLTRANSFERASE"/>
    <property type="match status" value="1"/>
</dbReference>
<dbReference type="Pfam" id="PF01938">
    <property type="entry name" value="TRAM"/>
    <property type="match status" value="1"/>
</dbReference>
<dbReference type="Pfam" id="PF05958">
    <property type="entry name" value="tRNA_U5-meth_tr"/>
    <property type="match status" value="1"/>
</dbReference>
<dbReference type="SUPFAM" id="SSF50249">
    <property type="entry name" value="Nucleic acid-binding proteins"/>
    <property type="match status" value="1"/>
</dbReference>
<dbReference type="SUPFAM" id="SSF53335">
    <property type="entry name" value="S-adenosyl-L-methionine-dependent methyltransferases"/>
    <property type="match status" value="1"/>
</dbReference>
<dbReference type="PROSITE" id="PS51687">
    <property type="entry name" value="SAM_MT_RNA_M5U"/>
    <property type="match status" value="1"/>
</dbReference>
<dbReference type="PROSITE" id="PS50926">
    <property type="entry name" value="TRAM"/>
    <property type="match status" value="1"/>
</dbReference>
<dbReference type="PROSITE" id="PS01230">
    <property type="entry name" value="TRMA_1"/>
    <property type="match status" value="1"/>
</dbReference>
<protein>
    <recommendedName>
        <fullName evidence="1">23S rRNA (uracil(1939)-C(5))-methyltransferase RlmD</fullName>
        <ecNumber evidence="1">2.1.1.190</ecNumber>
    </recommendedName>
    <alternativeName>
        <fullName evidence="1">23S rRNA(m5U1939)-methyltransferase</fullName>
    </alternativeName>
</protein>
<feature type="chain" id="PRO_0000414803" description="23S rRNA (uracil(1939)-C(5))-methyltransferase RlmD">
    <location>
        <begin position="1"/>
        <end position="436"/>
    </location>
</feature>
<feature type="domain" description="TRAM" evidence="1">
    <location>
        <begin position="10"/>
        <end position="68"/>
    </location>
</feature>
<feature type="active site" description="Nucleophile" evidence="1">
    <location>
        <position position="394"/>
    </location>
</feature>
<feature type="binding site" evidence="1">
    <location>
        <position position="81"/>
    </location>
    <ligand>
        <name>[4Fe-4S] cluster</name>
        <dbReference type="ChEBI" id="CHEBI:49883"/>
    </ligand>
</feature>
<feature type="binding site" evidence="1">
    <location>
        <position position="87"/>
    </location>
    <ligand>
        <name>[4Fe-4S] cluster</name>
        <dbReference type="ChEBI" id="CHEBI:49883"/>
    </ligand>
</feature>
<feature type="binding site" evidence="1">
    <location>
        <position position="90"/>
    </location>
    <ligand>
        <name>[4Fe-4S] cluster</name>
        <dbReference type="ChEBI" id="CHEBI:49883"/>
    </ligand>
</feature>
<feature type="binding site" evidence="1">
    <location>
        <position position="168"/>
    </location>
    <ligand>
        <name>[4Fe-4S] cluster</name>
        <dbReference type="ChEBI" id="CHEBI:49883"/>
    </ligand>
</feature>
<feature type="binding site" evidence="1">
    <location>
        <position position="270"/>
    </location>
    <ligand>
        <name>S-adenosyl-L-methionine</name>
        <dbReference type="ChEBI" id="CHEBI:59789"/>
    </ligand>
</feature>
<feature type="binding site" evidence="1">
    <location>
        <position position="299"/>
    </location>
    <ligand>
        <name>S-adenosyl-L-methionine</name>
        <dbReference type="ChEBI" id="CHEBI:59789"/>
    </ligand>
</feature>
<feature type="binding site" evidence="1">
    <location>
        <position position="304"/>
    </location>
    <ligand>
        <name>S-adenosyl-L-methionine</name>
        <dbReference type="ChEBI" id="CHEBI:59789"/>
    </ligand>
</feature>
<feature type="binding site" evidence="1">
    <location>
        <position position="320"/>
    </location>
    <ligand>
        <name>S-adenosyl-L-methionine</name>
        <dbReference type="ChEBI" id="CHEBI:59789"/>
    </ligand>
</feature>
<feature type="binding site" evidence="1">
    <location>
        <position position="347"/>
    </location>
    <ligand>
        <name>S-adenosyl-L-methionine</name>
        <dbReference type="ChEBI" id="CHEBI:59789"/>
    </ligand>
</feature>
<feature type="binding site" evidence="1">
    <location>
        <position position="368"/>
    </location>
    <ligand>
        <name>S-adenosyl-L-methionine</name>
        <dbReference type="ChEBI" id="CHEBI:59789"/>
    </ligand>
</feature>
<keyword id="KW-0004">4Fe-4S</keyword>
<keyword id="KW-0408">Iron</keyword>
<keyword id="KW-0411">Iron-sulfur</keyword>
<keyword id="KW-0479">Metal-binding</keyword>
<keyword id="KW-0489">Methyltransferase</keyword>
<keyword id="KW-0698">rRNA processing</keyword>
<keyword id="KW-0949">S-adenosyl-L-methionine</keyword>
<keyword id="KW-0808">Transferase</keyword>
<organism>
    <name type="scientific">Haemophilus parainfluenzae (strain T3T1)</name>
    <dbReference type="NCBI Taxonomy" id="862965"/>
    <lineage>
        <taxon>Bacteria</taxon>
        <taxon>Pseudomonadati</taxon>
        <taxon>Pseudomonadota</taxon>
        <taxon>Gammaproteobacteria</taxon>
        <taxon>Pasteurellales</taxon>
        <taxon>Pasteurellaceae</taxon>
        <taxon>Haemophilus</taxon>
    </lineage>
</organism>
<reference key="1">
    <citation type="submission" date="2010-07" db="EMBL/GenBank/DDBJ databases">
        <title>The genome sequence of Haemophilus parainfluenzae T3T1.</title>
        <authorList>
            <person name="Crook D."/>
            <person name="Hood D."/>
            <person name="Moxon R."/>
            <person name="Parkhill J."/>
            <person name="Aslett M."/>
            <person name="Bentley S.D."/>
        </authorList>
    </citation>
    <scope>NUCLEOTIDE SEQUENCE [LARGE SCALE GENOMIC DNA]</scope>
    <source>
        <strain>T3T1</strain>
    </source>
</reference>
<accession>E1W218</accession>
<evidence type="ECO:0000255" key="1">
    <source>
        <dbReference type="HAMAP-Rule" id="MF_01010"/>
    </source>
</evidence>
<comment type="function">
    <text evidence="1">Catalyzes the formation of 5-methyl-uridine at position 1939 (m5U1939) in 23S rRNA.</text>
</comment>
<comment type="catalytic activity">
    <reaction evidence="1">
        <text>uridine(1939) in 23S rRNA + S-adenosyl-L-methionine = 5-methyluridine(1939) in 23S rRNA + S-adenosyl-L-homocysteine + H(+)</text>
        <dbReference type="Rhea" id="RHEA:42908"/>
        <dbReference type="Rhea" id="RHEA-COMP:10278"/>
        <dbReference type="Rhea" id="RHEA-COMP:10279"/>
        <dbReference type="ChEBI" id="CHEBI:15378"/>
        <dbReference type="ChEBI" id="CHEBI:57856"/>
        <dbReference type="ChEBI" id="CHEBI:59789"/>
        <dbReference type="ChEBI" id="CHEBI:65315"/>
        <dbReference type="ChEBI" id="CHEBI:74447"/>
        <dbReference type="EC" id="2.1.1.190"/>
    </reaction>
</comment>
<comment type="similarity">
    <text evidence="1">Belongs to the class I-like SAM-binding methyltransferase superfamily. RNA M5U methyltransferase family. RlmD subfamily.</text>
</comment>